<evidence type="ECO:0000250" key="1"/>
<evidence type="ECO:0000250" key="2">
    <source>
        <dbReference type="UniProtKB" id="P29268"/>
    </source>
</evidence>
<evidence type="ECO:0000255" key="3"/>
<evidence type="ECO:0000255" key="4">
    <source>
        <dbReference type="PROSITE-ProRule" id="PRU00039"/>
    </source>
</evidence>
<evidence type="ECO:0000255" key="5">
    <source>
        <dbReference type="PROSITE-ProRule" id="PRU00210"/>
    </source>
</evidence>
<evidence type="ECO:0000255" key="6">
    <source>
        <dbReference type="PROSITE-ProRule" id="PRU00220"/>
    </source>
</evidence>
<evidence type="ECO:0000255" key="7">
    <source>
        <dbReference type="PROSITE-ProRule" id="PRU00653"/>
    </source>
</evidence>
<evidence type="ECO:0000269" key="8">
    <source>
    </source>
</evidence>
<evidence type="ECO:0000269" key="9">
    <source>
    </source>
</evidence>
<evidence type="ECO:0000269" key="10">
    <source>
    </source>
</evidence>
<evidence type="ECO:0000269" key="11">
    <source>
    </source>
</evidence>
<evidence type="ECO:0000269" key="12">
    <source>
    </source>
</evidence>
<evidence type="ECO:0000269" key="13">
    <source>
    </source>
</evidence>
<evidence type="ECO:0000269" key="14">
    <source>
    </source>
</evidence>
<evidence type="ECO:0000269" key="15">
    <source>
    </source>
</evidence>
<evidence type="ECO:0000269" key="16">
    <source>
    </source>
</evidence>
<evidence type="ECO:0000269" key="17">
    <source ref="12"/>
</evidence>
<evidence type="ECO:0000269" key="18">
    <source ref="4"/>
</evidence>
<evidence type="ECO:0000269" key="19">
    <source ref="5"/>
</evidence>
<evidence type="ECO:0000269" key="20">
    <source ref="6"/>
</evidence>
<evidence type="ECO:0000269" key="21">
    <source ref="7"/>
</evidence>
<evidence type="ECO:0000303" key="22">
    <source>
    </source>
</evidence>
<evidence type="ECO:0000303" key="23">
    <source>
    </source>
</evidence>
<evidence type="ECO:0000305" key="24"/>
<evidence type="ECO:0000312" key="25">
    <source>
        <dbReference type="HGNC" id="HGNC:2500"/>
    </source>
</evidence>
<comment type="function">
    <text evidence="8 9 14">Major connective tissue mitoattractant secreted by vascular endothelial cells. Promotes proliferation and differentiation of chondrocytes. Is involved in the stimulation of osteoblast differentiation and has a critical role in osteogenesis (PubMed:39414788). Mediates heparin- and divalent cation-dependent cell adhesion in many cell types including fibroblasts, myofibroblasts, endothelial and epithelial cells. Enhances fibroblast growth factor-induced DNA synthesis.</text>
</comment>
<comment type="subunit">
    <text evidence="11 13">Monomer (PubMed:1654338). Interacts with TSKU (PubMed:30232710).</text>
</comment>
<comment type="interaction">
    <interactant intactId="EBI-2835375">
        <id>P29279</id>
    </interactant>
    <interactant intactId="EBI-78473">
        <id>P03372</id>
        <label>ESR1</label>
    </interactant>
    <organismsDiffer>false</organismsDiffer>
    <experiments>7</experiments>
</comment>
<comment type="interaction">
    <interactant intactId="EBI-2835375">
        <id>P29279</id>
    </interactant>
    <interactant intactId="EBI-78505">
        <id>Q92731</id>
        <label>ESR2</label>
    </interactant>
    <organismsDiffer>false</organismsDiffer>
    <experiments>5</experiments>
</comment>
<comment type="interaction">
    <interactant intactId="EBI-2835375">
        <id>P29279</id>
    </interactant>
    <interactant intactId="EBI-1220319">
        <id>P02751</id>
        <label>FN1</label>
    </interactant>
    <organismsDiffer>false</organismsDiffer>
    <experiments>5</experiments>
</comment>
<comment type="subcellular location">
    <subcellularLocation>
        <location evidence="2">Secreted</location>
        <location evidence="2">Extracellular space</location>
        <location evidence="2">Extracellular matrix</location>
    </subcellularLocation>
    <subcellularLocation>
        <location evidence="14">Secreted</location>
    </subcellularLocation>
</comment>
<comment type="alternative products">
    <event type="alternative splicing"/>
    <isoform>
        <id>P29279-1</id>
        <name>1</name>
        <name>Long</name>
        <sequence type="displayed"/>
    </isoform>
    <isoform>
        <id>P29279-2</id>
        <name>2</name>
        <name>Short</name>
        <sequence type="described" ref="VSP_002460"/>
    </isoform>
</comment>
<comment type="tissue specificity">
    <text evidence="12">Expressed in bone marrow and thymic cells. Also expressed one of two Wilms tumors tested.</text>
</comment>
<comment type="disease" evidence="15">
    <disease id="DI-07003">
        <name>Kyphomelic dysplasia</name>
        <acronym>KMD</acronym>
        <description>An autosomal recessive skeletal dysplasia characterized by bowing of the limbs primarily affecting the femora, along with short stature, short and wide iliac wings, horizontal acetabular roof, platyspondyly, metaphyseal flaring and distinctive facial features that include prominent forehead, micrognathia, microstomia, cleft palate and low set ears.</description>
        <dbReference type="MIM" id="211350"/>
    </disease>
    <text>The disease may be caused by variants affecting the gene represented in this entry.</text>
</comment>
<comment type="disease" evidence="14">
    <disease id="DI-07002">
        <name>Spondyloepimetaphyseal dysplasia, Li-Shao-Li type</name>
        <acronym>SEMDLSL</acronym>
        <description>A form of spondyloepimetaphyseal dysplasia, a clinically and genetically heterogeneous group of skeletal disorders marked by vertebral, epiphyseal, and metaphyseal abnormalities. SEMDLSL is an autosomal dominant form characterized by childhood onset of defective skeletal development. Affected individuals exhibit disproportionate short stature, short lower limbs, limited joint flexion, premature osteoarthritis-like changes in weight-bearing joints, and low bone mass.</description>
        <dbReference type="MIM" id="621099"/>
    </disease>
    <text>The disease may be caused by variants affecting the gene represented in this entry.</text>
</comment>
<comment type="similarity">
    <text evidence="24">Belongs to the CCN family.</text>
</comment>
<comment type="online information" name="Atlas of Genetics and Cytogenetics in Oncology and Haematology">
    <link uri="https://atlasgeneticsoncology.org/gene/40192/CTGF"/>
</comment>
<reference key="1">
    <citation type="journal article" date="1991" name="J. Cell Biol.">
        <title>Connective tissue growth factor: a cysteine-rich mitogen secreted by human vascular endothelial cells is related to the SRC-induced immediate early gene product CEF-10.</title>
        <authorList>
            <person name="Bradham D.M."/>
            <person name="Igarashi A."/>
            <person name="Potter R.L."/>
            <person name="Grotendorst G.R."/>
        </authorList>
    </citation>
    <scope>NUCLEOTIDE SEQUENCE [MRNA]</scope>
    <scope>SUBUNIT</scope>
    <scope>VARIANT ASP-83</scope>
    <source>
        <tissue>Umbilical vein endothelial cell</tissue>
    </source>
</reference>
<reference key="2">
    <citation type="journal article" date="1992" name="J. Dermatol.">
        <title>Connective tissue growth factor.</title>
        <authorList>
            <person name="Igarashi A."/>
            <person name="Bradham D.M."/>
            <person name="Okochi H."/>
            <person name="Grotendorst G.R."/>
        </authorList>
    </citation>
    <scope>NUCLEOTIDE SEQUENCE [MRNA]</scope>
    <scope>VARIANT ASP-83</scope>
    <source>
        <tissue>Umbilical vein endothelial cell</tissue>
    </source>
</reference>
<reference key="3">
    <citation type="journal article" date="1997" name="Circulation">
        <title>Human connective tissue growth factor is expressed in advanced atherosclerotic lesions.</title>
        <authorList>
            <person name="Oemar B.S."/>
            <person name="Werner A."/>
            <person name="Garnier J.-M."/>
            <person name="Do D.D."/>
            <person name="Godoy N."/>
            <person name="Nauck M."/>
            <person name="Marz W."/>
            <person name="Rupp J."/>
            <person name="Pech M."/>
            <person name="Luescher T.F."/>
        </authorList>
    </citation>
    <scope>NUCLEOTIDE SEQUENCE [MRNA]</scope>
    <scope>VARIANT ASP-83</scope>
    <source>
        <tissue>Aorta</tissue>
    </source>
</reference>
<reference key="4">
    <citation type="submission" date="2003-09" db="EMBL/GenBank/DDBJ databases">
        <title>Expression, purification and bio-activity of human connective tissue growth factor.</title>
        <authorList>
            <person name="Li Q.-H."/>
            <person name="Wang L.-C."/>
            <person name="Liu L.-D."/>
            <person name="Dong S.-Z."/>
            <person name="Wang J.-J."/>
            <person name="Hu F."/>
            <person name="Wang J."/>
            <person name="He S.-Q."/>
            <person name="Dong C.-H."/>
            <person name="Zhao S.-D."/>
            <person name="Zhao H.-L."/>
        </authorList>
    </citation>
    <scope>NUCLEOTIDE SEQUENCE [MRNA] (ISOFORM 1)</scope>
    <scope>VARIANT ASP-83</scope>
</reference>
<reference key="5">
    <citation type="submission" date="2004-02" db="EMBL/GenBank/DDBJ databases">
        <title>Complete mRNA sequence of human connective tissue growth factor.</title>
        <authorList>
            <person name="Dai W.-J."/>
            <person name="Jiang H.-C."/>
            <person name="Fu S.-B."/>
        </authorList>
    </citation>
    <scope>NUCLEOTIDE SEQUENCE [MRNA] (ISOFORM 1)</scope>
    <scope>VARIANT ASP-83</scope>
    <source>
        <tissue>Liver</tissue>
    </source>
</reference>
<reference key="6">
    <citation type="submission" date="2004-10" db="EMBL/GenBank/DDBJ databases">
        <title>Cloning of human full-length CDSs in BD Creator(TM) system donor vector.</title>
        <authorList>
            <person name="Kalnine N."/>
            <person name="Chen X."/>
            <person name="Rolfs A."/>
            <person name="Halleck A."/>
            <person name="Hines L."/>
            <person name="Eisenstein S."/>
            <person name="Koundinya M."/>
            <person name="Raphael J."/>
            <person name="Moreira D."/>
            <person name="Kelley T."/>
            <person name="LaBaer J."/>
            <person name="Lin Y."/>
            <person name="Phelan M."/>
            <person name="Farmer A."/>
        </authorList>
    </citation>
    <scope>NUCLEOTIDE SEQUENCE [LARGE SCALE MRNA] (ISOFORM 1)</scope>
    <scope>VARIANT ASP-83</scope>
</reference>
<reference key="7">
    <citation type="submission" date="2004-06" db="EMBL/GenBank/DDBJ databases">
        <title>Cloning of human full open reading frames in Gateway(TM) system entry vector (pDONR201).</title>
        <authorList>
            <person name="Halleck A."/>
            <person name="Ebert L."/>
            <person name="Mkoundinya M."/>
            <person name="Schick M."/>
            <person name="Eisenstein S."/>
            <person name="Neubert P."/>
            <person name="Kstrang K."/>
            <person name="Schatten R."/>
            <person name="Shen B."/>
            <person name="Henze S."/>
            <person name="Mar W."/>
            <person name="Korn B."/>
            <person name="Zuo D."/>
            <person name="Hu Y."/>
            <person name="LaBaer J."/>
        </authorList>
    </citation>
    <scope>NUCLEOTIDE SEQUENCE [LARGE SCALE MRNA] (ISOFORM 1)</scope>
    <scope>VARIANT ASP-83</scope>
</reference>
<reference key="8">
    <citation type="journal article" date="2003" name="Nature">
        <title>The DNA sequence and analysis of human chromosome 6.</title>
        <authorList>
            <person name="Mungall A.J."/>
            <person name="Palmer S.A."/>
            <person name="Sims S.K."/>
            <person name="Edwards C.A."/>
            <person name="Ashurst J.L."/>
            <person name="Wilming L."/>
            <person name="Jones M.C."/>
            <person name="Horton R."/>
            <person name="Hunt S.E."/>
            <person name="Scott C.E."/>
            <person name="Gilbert J.G.R."/>
            <person name="Clamp M.E."/>
            <person name="Bethel G."/>
            <person name="Milne S."/>
            <person name="Ainscough R."/>
            <person name="Almeida J.P."/>
            <person name="Ambrose K.D."/>
            <person name="Andrews T.D."/>
            <person name="Ashwell R.I.S."/>
            <person name="Babbage A.K."/>
            <person name="Bagguley C.L."/>
            <person name="Bailey J."/>
            <person name="Banerjee R."/>
            <person name="Barker D.J."/>
            <person name="Barlow K.F."/>
            <person name="Bates K."/>
            <person name="Beare D.M."/>
            <person name="Beasley H."/>
            <person name="Beasley O."/>
            <person name="Bird C.P."/>
            <person name="Blakey S.E."/>
            <person name="Bray-Allen S."/>
            <person name="Brook J."/>
            <person name="Brown A.J."/>
            <person name="Brown J.Y."/>
            <person name="Burford D.C."/>
            <person name="Burrill W."/>
            <person name="Burton J."/>
            <person name="Carder C."/>
            <person name="Carter N.P."/>
            <person name="Chapman J.C."/>
            <person name="Clark S.Y."/>
            <person name="Clark G."/>
            <person name="Clee C.M."/>
            <person name="Clegg S."/>
            <person name="Cobley V."/>
            <person name="Collier R.E."/>
            <person name="Collins J.E."/>
            <person name="Colman L.K."/>
            <person name="Corby N.R."/>
            <person name="Coville G.J."/>
            <person name="Culley K.M."/>
            <person name="Dhami P."/>
            <person name="Davies J."/>
            <person name="Dunn M."/>
            <person name="Earthrowl M.E."/>
            <person name="Ellington A.E."/>
            <person name="Evans K.A."/>
            <person name="Faulkner L."/>
            <person name="Francis M.D."/>
            <person name="Frankish A."/>
            <person name="Frankland J."/>
            <person name="French L."/>
            <person name="Garner P."/>
            <person name="Garnett J."/>
            <person name="Ghori M.J."/>
            <person name="Gilby L.M."/>
            <person name="Gillson C.J."/>
            <person name="Glithero R.J."/>
            <person name="Grafham D.V."/>
            <person name="Grant M."/>
            <person name="Gribble S."/>
            <person name="Griffiths C."/>
            <person name="Griffiths M.N.D."/>
            <person name="Hall R."/>
            <person name="Halls K.S."/>
            <person name="Hammond S."/>
            <person name="Harley J.L."/>
            <person name="Hart E.A."/>
            <person name="Heath P.D."/>
            <person name="Heathcott R."/>
            <person name="Holmes S.J."/>
            <person name="Howden P.J."/>
            <person name="Howe K.L."/>
            <person name="Howell G.R."/>
            <person name="Huckle E."/>
            <person name="Humphray S.J."/>
            <person name="Humphries M.D."/>
            <person name="Hunt A.R."/>
            <person name="Johnson C.M."/>
            <person name="Joy A.A."/>
            <person name="Kay M."/>
            <person name="Keenan S.J."/>
            <person name="Kimberley A.M."/>
            <person name="King A."/>
            <person name="Laird G.K."/>
            <person name="Langford C."/>
            <person name="Lawlor S."/>
            <person name="Leongamornlert D.A."/>
            <person name="Leversha M."/>
            <person name="Lloyd C.R."/>
            <person name="Lloyd D.M."/>
            <person name="Loveland J.E."/>
            <person name="Lovell J."/>
            <person name="Martin S."/>
            <person name="Mashreghi-Mohammadi M."/>
            <person name="Maslen G.L."/>
            <person name="Matthews L."/>
            <person name="McCann O.T."/>
            <person name="McLaren S.J."/>
            <person name="McLay K."/>
            <person name="McMurray A."/>
            <person name="Moore M.J.F."/>
            <person name="Mullikin J.C."/>
            <person name="Niblett D."/>
            <person name="Nickerson T."/>
            <person name="Novik K.L."/>
            <person name="Oliver K."/>
            <person name="Overton-Larty E.K."/>
            <person name="Parker A."/>
            <person name="Patel R."/>
            <person name="Pearce A.V."/>
            <person name="Peck A.I."/>
            <person name="Phillimore B.J.C.T."/>
            <person name="Phillips S."/>
            <person name="Plumb R.W."/>
            <person name="Porter K.M."/>
            <person name="Ramsey Y."/>
            <person name="Ranby S.A."/>
            <person name="Rice C.M."/>
            <person name="Ross M.T."/>
            <person name="Searle S.M."/>
            <person name="Sehra H.K."/>
            <person name="Sheridan E."/>
            <person name="Skuce C.D."/>
            <person name="Smith S."/>
            <person name="Smith M."/>
            <person name="Spraggon L."/>
            <person name="Squares S.L."/>
            <person name="Steward C.A."/>
            <person name="Sycamore N."/>
            <person name="Tamlyn-Hall G."/>
            <person name="Tester J."/>
            <person name="Theaker A.J."/>
            <person name="Thomas D.W."/>
            <person name="Thorpe A."/>
            <person name="Tracey A."/>
            <person name="Tromans A."/>
            <person name="Tubby B."/>
            <person name="Wall M."/>
            <person name="Wallis J.M."/>
            <person name="West A.P."/>
            <person name="White S.S."/>
            <person name="Whitehead S.L."/>
            <person name="Whittaker H."/>
            <person name="Wild A."/>
            <person name="Willey D.J."/>
            <person name="Wilmer T.E."/>
            <person name="Wood J.M."/>
            <person name="Wray P.W."/>
            <person name="Wyatt J.C."/>
            <person name="Young L."/>
            <person name="Younger R.M."/>
            <person name="Bentley D.R."/>
            <person name="Coulson A."/>
            <person name="Durbin R.M."/>
            <person name="Hubbard T."/>
            <person name="Sulston J.E."/>
            <person name="Dunham I."/>
            <person name="Rogers J."/>
            <person name="Beck S."/>
        </authorList>
    </citation>
    <scope>NUCLEOTIDE SEQUENCE [LARGE SCALE GENOMIC DNA]</scope>
</reference>
<reference key="9">
    <citation type="submission" date="2005-09" db="EMBL/GenBank/DDBJ databases">
        <authorList>
            <person name="Mural R.J."/>
            <person name="Istrail S."/>
            <person name="Sutton G.G."/>
            <person name="Florea L."/>
            <person name="Halpern A.L."/>
            <person name="Mobarry C.M."/>
            <person name="Lippert R."/>
            <person name="Walenz B."/>
            <person name="Shatkay H."/>
            <person name="Dew I."/>
            <person name="Miller J.R."/>
            <person name="Flanigan M.J."/>
            <person name="Edwards N.J."/>
            <person name="Bolanos R."/>
            <person name="Fasulo D."/>
            <person name="Halldorsson B.V."/>
            <person name="Hannenhalli S."/>
            <person name="Turner R."/>
            <person name="Yooseph S."/>
            <person name="Lu F."/>
            <person name="Nusskern D.R."/>
            <person name="Shue B.C."/>
            <person name="Zheng X.H."/>
            <person name="Zhong F."/>
            <person name="Delcher A.L."/>
            <person name="Huson D.H."/>
            <person name="Kravitz S.A."/>
            <person name="Mouchard L."/>
            <person name="Reinert K."/>
            <person name="Remington K.A."/>
            <person name="Clark A.G."/>
            <person name="Waterman M.S."/>
            <person name="Eichler E.E."/>
            <person name="Adams M.D."/>
            <person name="Hunkapiller M.W."/>
            <person name="Myers E.W."/>
            <person name="Venter J.C."/>
        </authorList>
    </citation>
    <scope>NUCLEOTIDE SEQUENCE [LARGE SCALE GENOMIC DNA]</scope>
</reference>
<reference key="10">
    <citation type="journal article" date="1996" name="Clin. Mol. Pathol.">
        <title>Differential expression of novH and CTGF in human glioma cell lines.</title>
        <authorList>
            <person name="Xin L.W."/>
            <person name="Martinerie C."/>
            <person name="Zumkeller W."/>
            <person name="Westphal M."/>
            <person name="Perbal B."/>
        </authorList>
    </citation>
    <scope>NUCLEOTIDE SEQUENCE [GENOMIC DNA] OF 1-20</scope>
    <source>
        <tissue>Placenta</tissue>
    </source>
</reference>
<reference key="11">
    <citation type="journal article" date="2001" name="J. Clin. Pathol.">
        <title>Identification of human CCN2 (connective tissue growth factor) promoter polymorphisms.</title>
        <authorList>
            <person name="Blom I.E."/>
            <person name="van Dijk A.J."/>
            <person name="de Weger R.A."/>
            <person name="Tilanus M.G.J."/>
            <person name="Goldschmeding R."/>
        </authorList>
    </citation>
    <scope>NUCLEOTIDE SEQUENCE [GENOMIC DNA] OF 1-20</scope>
</reference>
<reference key="12">
    <citation type="submission" date="1994-09" db="EMBL/GenBank/DDBJ databases">
        <title>Connective tissue growth factor mRNA is expressed in human keratinocytes as an immediate early gene that responds to serum, EGF, or wounding.</title>
        <authorList>
            <person name="Cody C.W."/>
            <person name="Walker N.J."/>
            <person name="Greenlee W.F."/>
            <person name="Sutter T.R."/>
        </authorList>
    </citation>
    <scope>NUCLEOTIDE SEQUENCE [MRNA] OF 75-349</scope>
    <scope>VARIANT ASP-83</scope>
</reference>
<reference key="13">
    <citation type="journal article" date="1991" name="C. R. Acad. Sci. III, Sci. Vie">
        <title>Expression of a gene encoding a novel potential IGF binding protein in human tissues.</title>
        <authorList>
            <person name="Martinerie C."/>
            <person name="Perbal B."/>
        </authorList>
    </citation>
    <scope>NUCLEOTIDE SEQUENCE [MRNA] OF 99-176 AND 204-225 (ISOFORM 1)</scope>
    <scope>TISSUE SPECIFICITY</scope>
</reference>
<reference key="14">
    <citation type="journal article" date="2000" name="Endocrinology">
        <title>Effects of CTGF/Hcs24, a product of a hypertrophic chondrocyte-specific gene, on the proliferation and differentiation of chondrocytes in culture.</title>
        <authorList>
            <person name="Nakanishi T."/>
            <person name="Nishida T."/>
            <person name="Shimo T."/>
            <person name="Kobayashi K."/>
            <person name="Kubo T."/>
            <person name="Tamatani T."/>
            <person name="Tezuka K."/>
            <person name="Takigawa M."/>
        </authorList>
    </citation>
    <scope>FUNCTION</scope>
    <source>
        <tissue>Chondrocyte</tissue>
    </source>
</reference>
<reference key="15">
    <citation type="journal article" date="2003" name="J. Endocrinol.">
        <title>The heparin-binding 10 kDa fragment of connective tissue growth factor (CTGF) containing module 4 alone stimulates cell adhesion.</title>
        <authorList>
            <person name="Ball D.K."/>
            <person name="Rachfal A.W."/>
            <person name="Kemper S.A."/>
            <person name="Brigstock D.R."/>
        </authorList>
    </citation>
    <scope>HEPARIN-BINDING</scope>
    <scope>FUNCTION IN CELL ADHESION</scope>
</reference>
<reference key="16">
    <citation type="journal article" date="2019" name="J. Cell Commun. Signal.">
        <title>CCN2/CTGF binds the small leucine rich proteoglycan protein Tsukushi.</title>
        <authorList>
            <person name="Ohta K."/>
            <person name="Aoyama E."/>
            <person name="Ahmad S.A.I."/>
            <person name="Ito N."/>
            <person name="Anam M.B."/>
            <person name="Kubota S."/>
            <person name="Takigawa M."/>
        </authorList>
    </citation>
    <scope>INTERACTION WITH TSKU</scope>
</reference>
<reference key="17">
    <citation type="journal article" date="2024" name="Bone Res.">
        <title>A monoallelic variant in CCN2 causes an autosomal dominant spondyloepimetaphyseal dysplasia with low bone mass.</title>
        <authorList>
            <person name="Li S."/>
            <person name="Shao R."/>
            <person name="Li S."/>
            <person name="Zhao J."/>
            <person name="Deng Q."/>
            <person name="Li P."/>
            <person name="Wei Z."/>
            <person name="Xu S."/>
            <person name="Chen L."/>
            <person name="Li B."/>
            <person name="Zou W."/>
            <person name="Zhang Z."/>
        </authorList>
    </citation>
    <scope>VARIANT SEMDLSL PRO-22</scope>
    <scope>CHARACTERIZATION OF VARIANT SEMDLSL PRO-22</scope>
    <scope>INVOLVEMENT IN SEMDLSL</scope>
    <scope>FUNCTION</scope>
    <scope>SUBCELLULAR LOCATION</scope>
</reference>
<reference key="18">
    <citation type="journal article" date="2025" name="Eur. J. Hum. Genet.">
        <title>Biallelic variants in CCN2 underlie an autosomal recessive kyphomelic dysplasia.</title>
        <authorList>
            <person name="Singh S."/>
            <person name="Danda S."/>
            <person name="Sharma N."/>
            <person name="Shah H."/>
            <person name="Madhuri V."/>
            <person name="Mir T.A."/>
            <person name="Padala N.Z."/>
            <person name="Medishetti R."/>
            <person name="Ekbote A."/>
            <person name="Bhavani G.S."/>
            <person name="Sevilimedu A."/>
            <person name="Girisha K.M."/>
        </authorList>
    </citation>
    <scope>VARIANT KMD TYR-148</scope>
    <scope>INVOLVEMENT IN KMD</scope>
</reference>
<dbReference type="EMBL" id="M92934">
    <property type="protein sequence ID" value="AAA91279.1"/>
    <property type="molecule type" value="mRNA"/>
</dbReference>
<dbReference type="EMBL" id="X78947">
    <property type="protein sequence ID" value="CAA55544.1"/>
    <property type="molecule type" value="mRNA"/>
</dbReference>
<dbReference type="EMBL" id="AY395801">
    <property type="protein sequence ID" value="AAQ95223.1"/>
    <property type="molecule type" value="mRNA"/>
</dbReference>
<dbReference type="EMBL" id="AY550024">
    <property type="protein sequence ID" value="AAS55639.1"/>
    <property type="molecule type" value="mRNA"/>
</dbReference>
<dbReference type="EMBL" id="BT019794">
    <property type="protein sequence ID" value="AAV38597.1"/>
    <property type="molecule type" value="mRNA"/>
</dbReference>
<dbReference type="EMBL" id="BT019795">
    <property type="protein sequence ID" value="AAV38598.1"/>
    <property type="molecule type" value="mRNA"/>
</dbReference>
<dbReference type="EMBL" id="CR541759">
    <property type="protein sequence ID" value="CAG46559.1"/>
    <property type="molecule type" value="mRNA"/>
</dbReference>
<dbReference type="EMBL" id="AL354866">
    <property type="status" value="NOT_ANNOTATED_CDS"/>
    <property type="molecule type" value="Genomic_DNA"/>
</dbReference>
<dbReference type="EMBL" id="X92511">
    <property type="protein sequence ID" value="CAA63267.1"/>
    <property type="molecule type" value="Genomic_DNA"/>
</dbReference>
<dbReference type="EMBL" id="CH471051">
    <property type="protein sequence ID" value="EAW48038.1"/>
    <property type="molecule type" value="Genomic_DNA"/>
</dbReference>
<dbReference type="EMBL" id="CH471051">
    <property type="protein sequence ID" value="EAW48039.1"/>
    <property type="molecule type" value="Genomic_DNA"/>
</dbReference>
<dbReference type="EMBL" id="AF316366">
    <property type="protein sequence ID" value="AAK60505.1"/>
    <property type="molecule type" value="Genomic_DNA"/>
</dbReference>
<dbReference type="EMBL" id="AF316367">
    <property type="protein sequence ID" value="AAK60506.1"/>
    <property type="molecule type" value="Genomic_DNA"/>
</dbReference>
<dbReference type="EMBL" id="AF316368">
    <property type="protein sequence ID" value="AAK60507.1"/>
    <property type="molecule type" value="Genomic_DNA"/>
</dbReference>
<dbReference type="EMBL" id="U14750">
    <property type="protein sequence ID" value="AAA75378.1"/>
    <property type="molecule type" value="mRNA"/>
</dbReference>
<dbReference type="CCDS" id="CCDS5151.1">
    <molecule id="P29279-1"/>
</dbReference>
<dbReference type="PIR" id="A40551">
    <property type="entry name" value="A40551"/>
</dbReference>
<dbReference type="RefSeq" id="NP_001892.2">
    <molecule id="P29279-1"/>
    <property type="nucleotide sequence ID" value="NM_001901.4"/>
</dbReference>
<dbReference type="SMR" id="P29279"/>
<dbReference type="BioGRID" id="107872">
    <property type="interactions" value="28"/>
</dbReference>
<dbReference type="CORUM" id="P29279"/>
<dbReference type="FunCoup" id="P29279">
    <property type="interactions" value="593"/>
</dbReference>
<dbReference type="IntAct" id="P29279">
    <property type="interactions" value="28"/>
</dbReference>
<dbReference type="MINT" id="P29279"/>
<dbReference type="STRING" id="9606.ENSP00000356954"/>
<dbReference type="BindingDB" id="P29279"/>
<dbReference type="ChEMBL" id="CHEMBL3712901"/>
<dbReference type="TCDB" id="8.A.87.1.47">
    <property type="family name" value="the tbc1 domain (tbc1) family"/>
</dbReference>
<dbReference type="GlyCosmos" id="P29279">
    <property type="glycosylation" value="2 sites, No reported glycans"/>
</dbReference>
<dbReference type="GlyGen" id="P29279">
    <property type="glycosylation" value="6 sites, 2 O-linked glycans (3 sites)"/>
</dbReference>
<dbReference type="iPTMnet" id="P29279"/>
<dbReference type="PhosphoSitePlus" id="P29279"/>
<dbReference type="BioMuta" id="CTGF"/>
<dbReference type="DMDM" id="116241320"/>
<dbReference type="jPOST" id="P29279"/>
<dbReference type="MassIVE" id="P29279"/>
<dbReference type="PaxDb" id="9606-ENSP00000356954"/>
<dbReference type="PeptideAtlas" id="P29279"/>
<dbReference type="ProteomicsDB" id="54533">
    <molecule id="P29279-1"/>
</dbReference>
<dbReference type="ProteomicsDB" id="54534">
    <molecule id="P29279-2"/>
</dbReference>
<dbReference type="Pumba" id="P29279"/>
<dbReference type="ABCD" id="P29279">
    <property type="antibodies" value="3 sequenced antibodies"/>
</dbReference>
<dbReference type="Antibodypedia" id="3916">
    <property type="antibodies" value="1008 antibodies from 46 providers"/>
</dbReference>
<dbReference type="DNASU" id="1490"/>
<dbReference type="Ensembl" id="ENST00000367976.4">
    <molecule id="P29279-1"/>
    <property type="protein sequence ID" value="ENSP00000356954.3"/>
    <property type="gene ID" value="ENSG00000118523.6"/>
</dbReference>
<dbReference type="GeneID" id="1490"/>
<dbReference type="KEGG" id="hsa:1490"/>
<dbReference type="MANE-Select" id="ENST00000367976.4">
    <property type="protein sequence ID" value="ENSP00000356954.3"/>
    <property type="RefSeq nucleotide sequence ID" value="NM_001901.4"/>
    <property type="RefSeq protein sequence ID" value="NP_001892.2"/>
</dbReference>
<dbReference type="UCSC" id="uc003qcz.4">
    <molecule id="P29279-1"/>
    <property type="organism name" value="human"/>
</dbReference>
<dbReference type="AGR" id="HGNC:2500"/>
<dbReference type="CTD" id="1490"/>
<dbReference type="DisGeNET" id="1490"/>
<dbReference type="GeneCards" id="CCN2"/>
<dbReference type="HGNC" id="HGNC:2500">
    <property type="gene designation" value="CCN2"/>
</dbReference>
<dbReference type="HPA" id="ENSG00000118523">
    <property type="expression patterns" value="Low tissue specificity"/>
</dbReference>
<dbReference type="MalaCards" id="CCN2"/>
<dbReference type="MIM" id="121009">
    <property type="type" value="gene"/>
</dbReference>
<dbReference type="MIM" id="211350">
    <property type="type" value="phenotype"/>
</dbReference>
<dbReference type="MIM" id="621099">
    <property type="type" value="phenotype"/>
</dbReference>
<dbReference type="neXtProt" id="NX_P29279"/>
<dbReference type="OpenTargets" id="ENSG00000118523"/>
<dbReference type="Orphanet" id="220393">
    <property type="disease" value="Diffuse cutaneous systemic sclerosis"/>
</dbReference>
<dbReference type="Orphanet" id="220402">
    <property type="disease" value="Limited cutaneous systemic sclerosis"/>
</dbReference>
<dbReference type="PharmGKB" id="PA27003"/>
<dbReference type="VEuPathDB" id="HostDB:ENSG00000118523"/>
<dbReference type="eggNOG" id="ENOG502QQDX">
    <property type="taxonomic scope" value="Eukaryota"/>
</dbReference>
<dbReference type="GeneTree" id="ENSGT00940000155019"/>
<dbReference type="HOGENOM" id="CLU_063247_1_0_1"/>
<dbReference type="InParanoid" id="P29279"/>
<dbReference type="OMA" id="ERDPCDH"/>
<dbReference type="OrthoDB" id="365605at2759"/>
<dbReference type="PAN-GO" id="P29279">
    <property type="GO annotations" value="6 GO annotations based on evolutionary models"/>
</dbReference>
<dbReference type="PhylomeDB" id="P29279"/>
<dbReference type="TreeFam" id="TF326070"/>
<dbReference type="PathwayCommons" id="P29279"/>
<dbReference type="Reactome" id="R-HSA-2032785">
    <property type="pathway name" value="YAP1- and WWTR1 (TAZ)-stimulated gene expression"/>
</dbReference>
<dbReference type="Reactome" id="R-HSA-8951671">
    <property type="pathway name" value="RUNX3 regulates YAP1-mediated transcription"/>
</dbReference>
<dbReference type="SignaLink" id="P29279"/>
<dbReference type="SIGNOR" id="P29279"/>
<dbReference type="BioGRID-ORCS" id="1490">
    <property type="hits" value="12 hits in 1152 CRISPR screens"/>
</dbReference>
<dbReference type="ChiTaRS" id="CTGF">
    <property type="organism name" value="human"/>
</dbReference>
<dbReference type="GeneWiki" id="CTGF"/>
<dbReference type="GenomeRNAi" id="1490"/>
<dbReference type="Pharos" id="P29279">
    <property type="development level" value="Tbio"/>
</dbReference>
<dbReference type="PRO" id="PR:P29279"/>
<dbReference type="Proteomes" id="UP000005640">
    <property type="component" value="Chromosome 6"/>
</dbReference>
<dbReference type="RNAct" id="P29279">
    <property type="molecule type" value="protein"/>
</dbReference>
<dbReference type="Bgee" id="ENSG00000118523">
    <property type="expression patterns" value="Expressed in tibia and 191 other cell types or tissues"/>
</dbReference>
<dbReference type="GO" id="GO:0031012">
    <property type="term" value="C:extracellular matrix"/>
    <property type="evidence" value="ECO:0000318"/>
    <property type="project" value="GO_Central"/>
</dbReference>
<dbReference type="GO" id="GO:0005576">
    <property type="term" value="C:extracellular region"/>
    <property type="evidence" value="ECO:0000304"/>
    <property type="project" value="Reactome"/>
</dbReference>
<dbReference type="GO" id="GO:0005615">
    <property type="term" value="C:extracellular space"/>
    <property type="evidence" value="ECO:0000318"/>
    <property type="project" value="GO_Central"/>
</dbReference>
<dbReference type="GO" id="GO:0005794">
    <property type="term" value="C:Golgi apparatus"/>
    <property type="evidence" value="ECO:0000314"/>
    <property type="project" value="HPA"/>
</dbReference>
<dbReference type="GO" id="GO:0043231">
    <property type="term" value="C:intracellular membrane-bounded organelle"/>
    <property type="evidence" value="ECO:0000314"/>
    <property type="project" value="HPA"/>
</dbReference>
<dbReference type="GO" id="GO:0005886">
    <property type="term" value="C:plasma membrane"/>
    <property type="evidence" value="ECO:0000304"/>
    <property type="project" value="ProtInc"/>
</dbReference>
<dbReference type="GO" id="GO:0008201">
    <property type="term" value="F:heparin binding"/>
    <property type="evidence" value="ECO:0000318"/>
    <property type="project" value="GO_Central"/>
</dbReference>
<dbReference type="GO" id="GO:0005520">
    <property type="term" value="F:insulin-like growth factor binding"/>
    <property type="evidence" value="ECO:0000304"/>
    <property type="project" value="ProtInc"/>
</dbReference>
<dbReference type="GO" id="GO:0005178">
    <property type="term" value="F:integrin binding"/>
    <property type="evidence" value="ECO:0000318"/>
    <property type="project" value="GO_Central"/>
</dbReference>
<dbReference type="GO" id="GO:0001525">
    <property type="term" value="P:angiogenesis"/>
    <property type="evidence" value="ECO:0007669"/>
    <property type="project" value="Ensembl"/>
</dbReference>
<dbReference type="GO" id="GO:0001502">
    <property type="term" value="P:cartilage condensation"/>
    <property type="evidence" value="ECO:0007669"/>
    <property type="project" value="Ensembl"/>
</dbReference>
<dbReference type="GO" id="GO:0007155">
    <property type="term" value="P:cell adhesion"/>
    <property type="evidence" value="ECO:0000318"/>
    <property type="project" value="GO_Central"/>
</dbReference>
<dbReference type="GO" id="GO:0016477">
    <property type="term" value="P:cell migration"/>
    <property type="evidence" value="ECO:0007669"/>
    <property type="project" value="Ensembl"/>
</dbReference>
<dbReference type="GO" id="GO:0007160">
    <property type="term" value="P:cell-matrix adhesion"/>
    <property type="evidence" value="ECO:0007669"/>
    <property type="project" value="Ensembl"/>
</dbReference>
<dbReference type="GO" id="GO:0002062">
    <property type="term" value="P:chondrocyte differentiation"/>
    <property type="evidence" value="ECO:0007669"/>
    <property type="project" value="Ensembl"/>
</dbReference>
<dbReference type="GO" id="GO:0035988">
    <property type="term" value="P:chondrocyte proliferation"/>
    <property type="evidence" value="ECO:0007669"/>
    <property type="project" value="Ensembl"/>
</dbReference>
<dbReference type="GO" id="GO:0071897">
    <property type="term" value="P:DNA biosynthetic process"/>
    <property type="evidence" value="ECO:0007669"/>
    <property type="project" value="UniProtKB-KW"/>
</dbReference>
<dbReference type="GO" id="GO:0008544">
    <property type="term" value="P:epidermis development"/>
    <property type="evidence" value="ECO:0000304"/>
    <property type="project" value="ProtInc"/>
</dbReference>
<dbReference type="GO" id="GO:0008543">
    <property type="term" value="P:fibroblast growth factor receptor signaling pathway"/>
    <property type="evidence" value="ECO:0007669"/>
    <property type="project" value="Ensembl"/>
</dbReference>
<dbReference type="GO" id="GO:0007229">
    <property type="term" value="P:integrin-mediated signaling pathway"/>
    <property type="evidence" value="ECO:0007669"/>
    <property type="project" value="Ensembl"/>
</dbReference>
<dbReference type="GO" id="GO:0030324">
    <property type="term" value="P:lung development"/>
    <property type="evidence" value="ECO:0007669"/>
    <property type="project" value="Ensembl"/>
</dbReference>
<dbReference type="GO" id="GO:0010629">
    <property type="term" value="P:negative regulation of gene expression"/>
    <property type="evidence" value="ECO:0007669"/>
    <property type="project" value="Ensembl"/>
</dbReference>
<dbReference type="GO" id="GO:0001503">
    <property type="term" value="P:ossification"/>
    <property type="evidence" value="ECO:0007669"/>
    <property type="project" value="Ensembl"/>
</dbReference>
<dbReference type="GO" id="GO:0045597">
    <property type="term" value="P:positive regulation of cell differentiation"/>
    <property type="evidence" value="ECO:0000314"/>
    <property type="project" value="BHF-UCL"/>
</dbReference>
<dbReference type="GO" id="GO:0070374">
    <property type="term" value="P:positive regulation of ERK1 and ERK2 cascade"/>
    <property type="evidence" value="ECO:0000314"/>
    <property type="project" value="BHF-UCL"/>
</dbReference>
<dbReference type="GO" id="GO:0046330">
    <property type="term" value="P:positive regulation of JNK cascade"/>
    <property type="evidence" value="ECO:0000314"/>
    <property type="project" value="BHF-UCL"/>
</dbReference>
<dbReference type="GO" id="GO:0051496">
    <property type="term" value="P:positive regulation of stress fiber assembly"/>
    <property type="evidence" value="ECO:0000314"/>
    <property type="project" value="BHF-UCL"/>
</dbReference>
<dbReference type="GO" id="GO:0072593">
    <property type="term" value="P:reactive oxygen species metabolic process"/>
    <property type="evidence" value="ECO:0007669"/>
    <property type="project" value="Ensembl"/>
</dbReference>
<dbReference type="GO" id="GO:0032330">
    <property type="term" value="P:regulation of chondrocyte differentiation"/>
    <property type="evidence" value="ECO:0007669"/>
    <property type="project" value="Ensembl"/>
</dbReference>
<dbReference type="GO" id="GO:0009611">
    <property type="term" value="P:response to wounding"/>
    <property type="evidence" value="ECO:0000304"/>
    <property type="project" value="ProtInc"/>
</dbReference>
<dbReference type="GO" id="GO:0007165">
    <property type="term" value="P:signal transduction"/>
    <property type="evidence" value="ECO:0000318"/>
    <property type="project" value="GO_Central"/>
</dbReference>
<dbReference type="GO" id="GO:0001894">
    <property type="term" value="P:tissue homeostasis"/>
    <property type="evidence" value="ECO:0007669"/>
    <property type="project" value="Ensembl"/>
</dbReference>
<dbReference type="FunFam" id="2.20.100.10:FF:000036">
    <property type="entry name" value="Connective tissue growth factor (Predicted)"/>
    <property type="match status" value="1"/>
</dbReference>
<dbReference type="Gene3D" id="2.20.100.10">
    <property type="entry name" value="Thrombospondin type-1 (TSP1) repeat"/>
    <property type="match status" value="1"/>
</dbReference>
<dbReference type="InterPro" id="IPR050941">
    <property type="entry name" value="CCN"/>
</dbReference>
<dbReference type="InterPro" id="IPR006207">
    <property type="entry name" value="Cys_knot_C"/>
</dbReference>
<dbReference type="InterPro" id="IPR006208">
    <property type="entry name" value="Glyco_hormone_CN"/>
</dbReference>
<dbReference type="InterPro" id="IPR009030">
    <property type="entry name" value="Growth_fac_rcpt_cys_sf"/>
</dbReference>
<dbReference type="InterPro" id="IPR000867">
    <property type="entry name" value="IGFBP-like"/>
</dbReference>
<dbReference type="InterPro" id="IPR012395">
    <property type="entry name" value="IGFBP_CNN"/>
</dbReference>
<dbReference type="InterPro" id="IPR017891">
    <property type="entry name" value="Insulin_GF-bd_Cys-rich_CS"/>
</dbReference>
<dbReference type="InterPro" id="IPR043973">
    <property type="entry name" value="TSP1_CCN"/>
</dbReference>
<dbReference type="InterPro" id="IPR000884">
    <property type="entry name" value="TSP1_rpt"/>
</dbReference>
<dbReference type="InterPro" id="IPR036383">
    <property type="entry name" value="TSP1_rpt_sf"/>
</dbReference>
<dbReference type="InterPro" id="IPR001007">
    <property type="entry name" value="VWF_dom"/>
</dbReference>
<dbReference type="PANTHER" id="PTHR11348:SF7">
    <property type="entry name" value="CCN FAMILY MEMBER 2"/>
    <property type="match status" value="1"/>
</dbReference>
<dbReference type="PANTHER" id="PTHR11348">
    <property type="entry name" value="CONNECTIVE TISSUE GROWTH FACTOR-RELATED"/>
    <property type="match status" value="1"/>
</dbReference>
<dbReference type="Pfam" id="PF00007">
    <property type="entry name" value="Cys_knot"/>
    <property type="match status" value="1"/>
</dbReference>
<dbReference type="Pfam" id="PF00219">
    <property type="entry name" value="IGFBP"/>
    <property type="match status" value="1"/>
</dbReference>
<dbReference type="Pfam" id="PF19035">
    <property type="entry name" value="TSP1_CCN"/>
    <property type="match status" value="1"/>
</dbReference>
<dbReference type="Pfam" id="PF00093">
    <property type="entry name" value="VWC"/>
    <property type="match status" value="1"/>
</dbReference>
<dbReference type="PIRSF" id="PIRSF036495">
    <property type="entry name" value="IGFBP_rP_CNN"/>
    <property type="match status" value="1"/>
</dbReference>
<dbReference type="SMART" id="SM00041">
    <property type="entry name" value="CT"/>
    <property type="match status" value="1"/>
</dbReference>
<dbReference type="SMART" id="SM00121">
    <property type="entry name" value="IB"/>
    <property type="match status" value="1"/>
</dbReference>
<dbReference type="SMART" id="SM00209">
    <property type="entry name" value="TSP1"/>
    <property type="match status" value="1"/>
</dbReference>
<dbReference type="SMART" id="SM00214">
    <property type="entry name" value="VWC"/>
    <property type="match status" value="1"/>
</dbReference>
<dbReference type="SUPFAM" id="SSF57603">
    <property type="entry name" value="FnI-like domain"/>
    <property type="match status" value="1"/>
</dbReference>
<dbReference type="SUPFAM" id="SSF57184">
    <property type="entry name" value="Growth factor receptor domain"/>
    <property type="match status" value="1"/>
</dbReference>
<dbReference type="SUPFAM" id="SSF82895">
    <property type="entry name" value="TSP-1 type 1 repeat"/>
    <property type="match status" value="1"/>
</dbReference>
<dbReference type="PROSITE" id="PS01185">
    <property type="entry name" value="CTCK_1"/>
    <property type="match status" value="1"/>
</dbReference>
<dbReference type="PROSITE" id="PS01225">
    <property type="entry name" value="CTCK_2"/>
    <property type="match status" value="1"/>
</dbReference>
<dbReference type="PROSITE" id="PS00222">
    <property type="entry name" value="IGFBP_N_1"/>
    <property type="match status" value="1"/>
</dbReference>
<dbReference type="PROSITE" id="PS51323">
    <property type="entry name" value="IGFBP_N_2"/>
    <property type="match status" value="1"/>
</dbReference>
<dbReference type="PROSITE" id="PS50092">
    <property type="entry name" value="TSP1"/>
    <property type="match status" value="1"/>
</dbReference>
<dbReference type="PROSITE" id="PS01208">
    <property type="entry name" value="VWFC_1"/>
    <property type="match status" value="1"/>
</dbReference>
<dbReference type="PROSITE" id="PS50184">
    <property type="entry name" value="VWFC_2"/>
    <property type="match status" value="1"/>
</dbReference>
<proteinExistence type="evidence at protein level"/>
<feature type="signal peptide" evidence="3">
    <location>
        <begin position="1"/>
        <end position="26"/>
    </location>
</feature>
<feature type="chain" id="PRO_0000014402" description="CCN family member 2">
    <location>
        <begin position="27"/>
        <end position="349"/>
    </location>
</feature>
<feature type="domain" description="IGFBP N-terminal" evidence="7">
    <location>
        <begin position="27"/>
        <end position="98"/>
    </location>
</feature>
<feature type="domain" description="VWFC" evidence="6">
    <location>
        <begin position="101"/>
        <end position="167"/>
    </location>
</feature>
<feature type="domain" description="TSP type-1" evidence="5">
    <location>
        <begin position="198"/>
        <end position="243"/>
    </location>
</feature>
<feature type="domain" description="CTCK" evidence="4">
    <location>
        <begin position="256"/>
        <end position="330"/>
    </location>
</feature>
<feature type="region of interest" description="Heparin-binding" evidence="9">
    <location>
        <begin position="247"/>
        <end position="349"/>
    </location>
</feature>
<feature type="glycosylation site" description="N-linked (GlcNAc...) asparagine" evidence="3">
    <location>
        <position position="28"/>
    </location>
</feature>
<feature type="glycosylation site" description="N-linked (GlcNAc...) asparagine" evidence="3">
    <location>
        <position position="225"/>
    </location>
</feature>
<feature type="disulfide bond" evidence="7">
    <location>
        <begin position="29"/>
        <end position="54"/>
    </location>
</feature>
<feature type="disulfide bond" evidence="7">
    <location>
        <begin position="33"/>
        <end position="56"/>
    </location>
</feature>
<feature type="disulfide bond" evidence="7">
    <location>
        <begin position="35"/>
        <end position="57"/>
    </location>
</feature>
<feature type="disulfide bond" evidence="7">
    <location>
        <begin position="43"/>
        <end position="60"/>
    </location>
</feature>
<feature type="disulfide bond" evidence="7">
    <location>
        <begin position="68"/>
        <end position="82"/>
    </location>
</feature>
<feature type="disulfide bond" evidence="7">
    <location>
        <begin position="74"/>
        <end position="95"/>
    </location>
</feature>
<feature type="disulfide bond" evidence="1">
    <location>
        <begin position="256"/>
        <end position="293"/>
    </location>
</feature>
<feature type="disulfide bond" evidence="1">
    <location>
        <begin position="273"/>
        <end position="307"/>
    </location>
</feature>
<feature type="disulfide bond" evidence="1">
    <location>
        <begin position="284"/>
        <end position="323"/>
    </location>
</feature>
<feature type="disulfide bond" evidence="1">
    <location>
        <begin position="287"/>
        <end position="325"/>
    </location>
</feature>
<feature type="disulfide bond" evidence="1">
    <location>
        <begin position="292"/>
        <end position="329"/>
    </location>
</feature>
<feature type="splice variant" id="VSP_002460" description="In isoform 2." evidence="24">
    <location>
        <begin position="172"/>
        <end position="198"/>
    </location>
</feature>
<feature type="sequence variant" id="VAR_090430" description="In SEMDLSL; likely pathogenic; decreased CCN2 protein secretion." evidence="14">
    <original>R</original>
    <variation>P</variation>
    <location>
        <position position="22"/>
    </location>
</feature>
<feature type="sequence variant" id="VAR_027925" description="In dbSNP:rs7451102." evidence="10 11 16 17 18 19 20 21">
    <original>H</original>
    <variation>D</variation>
    <location>
        <position position="83"/>
    </location>
</feature>
<feature type="sequence variant" id="VAR_090431" description="In KMD; uncertain significance." evidence="15">
    <original>C</original>
    <variation>Y</variation>
    <location>
        <position position="148"/>
    </location>
</feature>
<feature type="sequence conflict" description="In Ref. 13; no nucleotide entry." evidence="24" ref="13">
    <original>V</original>
    <variation>L</variation>
    <location>
        <position position="175"/>
    </location>
</feature>
<protein>
    <recommendedName>
        <fullName evidence="24">CCN family member 2</fullName>
    </recommendedName>
    <alternativeName>
        <fullName evidence="25">Cellular communication network factor 2</fullName>
    </alternativeName>
    <alternativeName>
        <fullName evidence="23">Connective tissue growth factor</fullName>
    </alternativeName>
    <alternativeName>
        <fullName evidence="22">Hypertrophic chondrocyte-specific protein 24</fullName>
    </alternativeName>
    <alternativeName>
        <fullName>Insulin-like growth factor-binding protein 8</fullName>
        <shortName>IBP-8</shortName>
        <shortName>IGF-binding protein 8</shortName>
        <shortName>IGFBP-8</shortName>
    </alternativeName>
</protein>
<gene>
    <name evidence="25" type="primary">CCN2</name>
    <name evidence="23" type="synonym">CTGF</name>
    <name evidence="22" type="synonym">HCS24</name>
    <name type="synonym">IGFBP8</name>
</gene>
<organism>
    <name type="scientific">Homo sapiens</name>
    <name type="common">Human</name>
    <dbReference type="NCBI Taxonomy" id="9606"/>
    <lineage>
        <taxon>Eukaryota</taxon>
        <taxon>Metazoa</taxon>
        <taxon>Chordata</taxon>
        <taxon>Craniata</taxon>
        <taxon>Vertebrata</taxon>
        <taxon>Euteleostomi</taxon>
        <taxon>Mammalia</taxon>
        <taxon>Eutheria</taxon>
        <taxon>Euarchontoglires</taxon>
        <taxon>Primates</taxon>
        <taxon>Haplorrhini</taxon>
        <taxon>Catarrhini</taxon>
        <taxon>Hominidae</taxon>
        <taxon>Homo</taxon>
    </lineage>
</organism>
<name>CCN2_HUMAN</name>
<keyword id="KW-0025">Alternative splicing</keyword>
<keyword id="KW-0130">Cell adhesion</keyword>
<keyword id="KW-0225">Disease variant</keyword>
<keyword id="KW-1015">Disulfide bond</keyword>
<keyword id="KW-0237">DNA synthesis</keyword>
<keyword id="KW-0242">Dwarfism</keyword>
<keyword id="KW-0272">Extracellular matrix</keyword>
<keyword id="KW-0325">Glycoprotein</keyword>
<keyword id="KW-0358">Heparin-binding</keyword>
<keyword id="KW-1267">Proteomics identification</keyword>
<keyword id="KW-1185">Reference proteome</keyword>
<keyword id="KW-0964">Secreted</keyword>
<keyword id="KW-0732">Signal</keyword>
<accession>P29279</accession>
<accession>E1P578</accession>
<accession>Q6LCY0</accession>
<accession>Q96A79</accession>
<accession>Q96QX2</accession>
<accession>Q9UDL6</accession>
<sequence>MTAASMGPVRVAFVVLLALCSRPAVGQNCSGPCRCPDEPAPRCPAGVSLVLDGCGCCRVCAKQLGELCTERDPCDPHKGLFCHFGSPANRKIGVCTAKDGAPCIFGGTVYRSGESFQSSCKYQCTCLDGAVGCMPLCSMDVRLPSPDCPFPRRVKLPGKCCEEWVCDEPKDQTVVGPALAAYRLEDTFGPDPTMIRANCLVQTTEWSACSKTCGMGISTRVTNDNASCRLEKQSRLCMVRPCEADLEENIKKGKKCIRTPKISKPIKFELSGCTSMKTYRAKFCGVCTDGRCCTPHRTTTLPVEFKCPDGEVMKKNMMFIKTCACHYNCPGDNDIFESLYYRKMYGDMA</sequence>